<proteinExistence type="evidence at protein level"/>
<evidence type="ECO:0000250" key="1">
    <source>
        <dbReference type="UniProtKB" id="P0AFU8"/>
    </source>
</evidence>
<evidence type="ECO:0000250" key="2">
    <source>
        <dbReference type="UniProtKB" id="Q2YN92"/>
    </source>
</evidence>
<evidence type="ECO:0000250" key="3">
    <source>
        <dbReference type="UniProtKB" id="Q9Y7P0"/>
    </source>
</evidence>
<evidence type="ECO:0000269" key="4">
    <source>
    </source>
</evidence>
<evidence type="ECO:0000269" key="5">
    <source>
    </source>
</evidence>
<evidence type="ECO:0000303" key="6">
    <source>
    </source>
</evidence>
<evidence type="ECO:0007744" key="7">
    <source>
    </source>
</evidence>
<protein>
    <recommendedName>
        <fullName evidence="6">Riboflavin synthase</fullName>
        <shortName evidence="6">RS</shortName>
        <ecNumber evidence="5">2.5.1.9</ecNumber>
    </recommendedName>
</protein>
<reference key="1">
    <citation type="journal article" date="1995" name="J. Biol. Chem.">
        <title>Riboflavin biosynthesis in Saccharomyces cerevisiae. Cloning, characterization, and expression of the RIB5 gene encoding riboflavin synthase.</title>
        <authorList>
            <person name="Santos M.A."/>
            <person name="Garcia-Ramirez J.J."/>
            <person name="Revuelta J.L."/>
        </authorList>
    </citation>
    <scope>NUCLEOTIDE SEQUENCE [GENOMIC DNA]</scope>
    <scope>FUNCTION</scope>
    <scope>CATALYTIC ACTIVITY</scope>
</reference>
<reference key="2">
    <citation type="journal article" date="1993" name="Yeast">
        <title>The complete sequence of a 19,482 bp segment located on the right arm of chromosome II from Saccharomyces cerevisiae.</title>
        <authorList>
            <person name="Doignon F."/>
            <person name="Biteau N."/>
            <person name="Crouzet M."/>
            <person name="Aigle M."/>
        </authorList>
    </citation>
    <scope>NUCLEOTIDE SEQUENCE [GENOMIC DNA]</scope>
    <source>
        <strain>ATCC 204508 / S288c</strain>
    </source>
</reference>
<reference key="3">
    <citation type="journal article" date="1994" name="EMBO J.">
        <title>Complete DNA sequence of yeast chromosome II.</title>
        <authorList>
            <person name="Feldmann H."/>
            <person name="Aigle M."/>
            <person name="Aljinovic G."/>
            <person name="Andre B."/>
            <person name="Baclet M.C."/>
            <person name="Barthe C."/>
            <person name="Baur A."/>
            <person name="Becam A.-M."/>
            <person name="Biteau N."/>
            <person name="Boles E."/>
            <person name="Brandt T."/>
            <person name="Brendel M."/>
            <person name="Brueckner M."/>
            <person name="Bussereau F."/>
            <person name="Christiansen C."/>
            <person name="Contreras R."/>
            <person name="Crouzet M."/>
            <person name="Cziepluch C."/>
            <person name="Demolis N."/>
            <person name="Delaveau T."/>
            <person name="Doignon F."/>
            <person name="Domdey H."/>
            <person name="Duesterhus S."/>
            <person name="Dubois E."/>
            <person name="Dujon B."/>
            <person name="El Bakkoury M."/>
            <person name="Entian K.-D."/>
            <person name="Feuermann M."/>
            <person name="Fiers W."/>
            <person name="Fobo G.M."/>
            <person name="Fritz C."/>
            <person name="Gassenhuber J."/>
            <person name="Glansdorff N."/>
            <person name="Goffeau A."/>
            <person name="Grivell L.A."/>
            <person name="de Haan M."/>
            <person name="Hein C."/>
            <person name="Herbert C.J."/>
            <person name="Hollenberg C.P."/>
            <person name="Holmstroem K."/>
            <person name="Jacq C."/>
            <person name="Jacquet M."/>
            <person name="Jauniaux J.-C."/>
            <person name="Jonniaux J.-L."/>
            <person name="Kallesoee T."/>
            <person name="Kiesau P."/>
            <person name="Kirchrath L."/>
            <person name="Koetter P."/>
            <person name="Korol S."/>
            <person name="Liebl S."/>
            <person name="Logghe M."/>
            <person name="Lohan A.J.E."/>
            <person name="Louis E.J."/>
            <person name="Li Z.Y."/>
            <person name="Maat M.J."/>
            <person name="Mallet L."/>
            <person name="Mannhaupt G."/>
            <person name="Messenguy F."/>
            <person name="Miosga T."/>
            <person name="Molemans F."/>
            <person name="Mueller S."/>
            <person name="Nasr F."/>
            <person name="Obermaier B."/>
            <person name="Perea J."/>
            <person name="Pierard A."/>
            <person name="Piravandi E."/>
            <person name="Pohl F.M."/>
            <person name="Pohl T.M."/>
            <person name="Potier S."/>
            <person name="Proft M."/>
            <person name="Purnelle B."/>
            <person name="Ramezani Rad M."/>
            <person name="Rieger M."/>
            <person name="Rose M."/>
            <person name="Schaaff-Gerstenschlaeger I."/>
            <person name="Scherens B."/>
            <person name="Schwarzlose C."/>
            <person name="Skala J."/>
            <person name="Slonimski P.P."/>
            <person name="Smits P.H.M."/>
            <person name="Souciet J.-L."/>
            <person name="Steensma H.Y."/>
            <person name="Stucka R."/>
            <person name="Urrestarazu L.A."/>
            <person name="van der Aart Q.J.M."/>
            <person name="Van Dyck L."/>
            <person name="Vassarotti A."/>
            <person name="Vetter I."/>
            <person name="Vierendeels F."/>
            <person name="Vissers S."/>
            <person name="Wagner G."/>
            <person name="de Wergifosse P."/>
            <person name="Wolfe K.H."/>
            <person name="Zagulski M."/>
            <person name="Zimmermann F.K."/>
            <person name="Mewes H.-W."/>
            <person name="Kleine K."/>
        </authorList>
    </citation>
    <scope>NUCLEOTIDE SEQUENCE [LARGE SCALE GENOMIC DNA]</scope>
    <source>
        <strain>ATCC 204508 / S288c</strain>
    </source>
</reference>
<reference key="4">
    <citation type="journal article" date="2014" name="G3 (Bethesda)">
        <title>The reference genome sequence of Saccharomyces cerevisiae: Then and now.</title>
        <authorList>
            <person name="Engel S.R."/>
            <person name="Dietrich F.S."/>
            <person name="Fisk D.G."/>
            <person name="Binkley G."/>
            <person name="Balakrishnan R."/>
            <person name="Costanzo M.C."/>
            <person name="Dwight S.S."/>
            <person name="Hitz B.C."/>
            <person name="Karra K."/>
            <person name="Nash R.S."/>
            <person name="Weng S."/>
            <person name="Wong E.D."/>
            <person name="Lloyd P."/>
            <person name="Skrzypek M.S."/>
            <person name="Miyasato S.R."/>
            <person name="Simison M."/>
            <person name="Cherry J.M."/>
        </authorList>
    </citation>
    <scope>GENOME REANNOTATION</scope>
    <source>
        <strain>ATCC 204508 / S288c</strain>
    </source>
</reference>
<reference key="5">
    <citation type="journal article" date="2003" name="Nature">
        <title>Global analysis of protein expression in yeast.</title>
        <authorList>
            <person name="Ghaemmaghami S."/>
            <person name="Huh W.-K."/>
            <person name="Bower K."/>
            <person name="Howson R.W."/>
            <person name="Belle A."/>
            <person name="Dephoure N."/>
            <person name="O'Shea E.K."/>
            <person name="Weissman J.S."/>
        </authorList>
    </citation>
    <scope>LEVEL OF PROTEIN EXPRESSION [LARGE SCALE ANALYSIS]</scope>
</reference>
<reference key="6">
    <citation type="journal article" date="2008" name="Mol. Cell. Proteomics">
        <title>A multidimensional chromatography technology for in-depth phosphoproteome analysis.</title>
        <authorList>
            <person name="Albuquerque C.P."/>
            <person name="Smolka M.B."/>
            <person name="Payne S.H."/>
            <person name="Bafna V."/>
            <person name="Eng J."/>
            <person name="Zhou H."/>
        </authorList>
    </citation>
    <scope>PHOSPHORYLATION [LARGE SCALE ANALYSIS] AT SER-95</scope>
    <scope>IDENTIFICATION BY MASS SPECTROMETRY [LARGE SCALE ANALYSIS]</scope>
</reference>
<feature type="chain" id="PRO_0000068174" description="Riboflavin synthase">
    <location>
        <begin position="1"/>
        <end position="238"/>
    </location>
</feature>
<feature type="repeat" description="Lumazine-binding 1" evidence="2">
    <location>
        <begin position="1"/>
        <end position="103"/>
    </location>
</feature>
<feature type="repeat" description="Lumazine-binding 2" evidence="2">
    <location>
        <begin position="104"/>
        <end position="205"/>
    </location>
</feature>
<feature type="binding site" evidence="2">
    <location>
        <begin position="4"/>
        <end position="6"/>
    </location>
    <ligand>
        <name>2,4-dihydroxypteridine</name>
        <dbReference type="ChEBI" id="CHEBI:16489"/>
        <label>1</label>
    </ligand>
</feature>
<feature type="binding site" evidence="2">
    <location>
        <begin position="54"/>
        <end position="56"/>
    </location>
    <ligand>
        <name>2,4-dihydroxypteridine</name>
        <dbReference type="ChEBI" id="CHEBI:16489"/>
        <label>2</label>
        <note>ligand shared between two trimeric partners</note>
    </ligand>
</feature>
<feature type="binding site" evidence="1">
    <location>
        <begin position="68"/>
        <end position="73"/>
    </location>
    <ligand>
        <name>2,4-dihydroxypteridine</name>
        <dbReference type="ChEBI" id="CHEBI:16489"/>
        <label>2</label>
        <note>ligand shared between two trimeric partners</note>
    </ligand>
</feature>
<feature type="binding site" evidence="2">
    <location>
        <begin position="107"/>
        <end position="109"/>
    </location>
    <ligand>
        <name>2,4-dihydroxypteridine</name>
        <dbReference type="ChEBI" id="CHEBI:16489"/>
        <label>2</label>
        <note>ligand shared between two trimeric partners</note>
    </ligand>
</feature>
<feature type="binding site" description="in other chain" evidence="2">
    <location>
        <position position="143"/>
    </location>
    <ligand>
        <name>2,4-dihydroxypteridine</name>
        <dbReference type="ChEBI" id="CHEBI:16489"/>
        <label>2</label>
        <note>ligand shared between two trimeric partners</note>
    </ligand>
</feature>
<feature type="binding site" evidence="2">
    <location>
        <begin position="152"/>
        <end position="154"/>
    </location>
    <ligand>
        <name>2,4-dihydroxypteridine</name>
        <dbReference type="ChEBI" id="CHEBI:16489"/>
        <label>1</label>
    </ligand>
</feature>
<feature type="binding site" evidence="2">
    <location>
        <begin position="170"/>
        <end position="175"/>
    </location>
    <ligand>
        <name>2,4-dihydroxypteridine</name>
        <dbReference type="ChEBI" id="CHEBI:16489"/>
        <label>1</label>
    </ligand>
</feature>
<feature type="modified residue" description="Phosphoserine" evidence="7">
    <location>
        <position position="95"/>
    </location>
</feature>
<name>RISA_YEAST</name>
<accession>P38145</accession>
<accession>D6VQQ3</accession>
<keyword id="KW-0597">Phosphoprotein</keyword>
<keyword id="KW-1185">Reference proteome</keyword>
<keyword id="KW-0677">Repeat</keyword>
<keyword id="KW-0686">Riboflavin biosynthesis</keyword>
<keyword id="KW-0808">Transferase</keyword>
<gene>
    <name evidence="6" type="primary">RIB5</name>
    <name type="ordered locus">YBR256C</name>
    <name type="ORF">YBR1724</name>
</gene>
<sequence length="238" mass="26196">MFTGIVECMGTVLENNPYDDSESGGQGVSITIGNAGSILTDCHVGDSIAVNGVCLTVTEFNNDSFKVGISPETIKRSNVASWIQGTQVNLERAVSQDVRFGGHYVQGHVDTVANIVSRRPEGNSIIFGFQLRDQEYFKYIVEKGFICIDGTSLTIIKVDPLSQGGAFYISMIKHTQDNVIMPLKKIGDEVNIEVDLTGKIIEKQILLTLENQISKKDSTLNTMISNIIEEKVRNYLNK</sequence>
<organism>
    <name type="scientific">Saccharomyces cerevisiae (strain ATCC 204508 / S288c)</name>
    <name type="common">Baker's yeast</name>
    <dbReference type="NCBI Taxonomy" id="559292"/>
    <lineage>
        <taxon>Eukaryota</taxon>
        <taxon>Fungi</taxon>
        <taxon>Dikarya</taxon>
        <taxon>Ascomycota</taxon>
        <taxon>Saccharomycotina</taxon>
        <taxon>Saccharomycetes</taxon>
        <taxon>Saccharomycetales</taxon>
        <taxon>Saccharomycetaceae</taxon>
        <taxon>Saccharomyces</taxon>
    </lineage>
</organism>
<dbReference type="EC" id="2.5.1.9" evidence="5"/>
<dbReference type="EMBL" id="Z21621">
    <property type="protein sequence ID" value="CAA79745.1"/>
    <property type="molecule type" value="Genomic_DNA"/>
</dbReference>
<dbReference type="EMBL" id="X70529">
    <property type="protein sequence ID" value="CAA49920.1"/>
    <property type="molecule type" value="Genomic_DNA"/>
</dbReference>
<dbReference type="EMBL" id="Z36125">
    <property type="protein sequence ID" value="CAA85219.1"/>
    <property type="molecule type" value="Genomic_DNA"/>
</dbReference>
<dbReference type="EMBL" id="BK006936">
    <property type="protein sequence ID" value="DAA07373.1"/>
    <property type="molecule type" value="Genomic_DNA"/>
</dbReference>
<dbReference type="PIR" id="S34072">
    <property type="entry name" value="S34072"/>
</dbReference>
<dbReference type="RefSeq" id="NP_009815.1">
    <property type="nucleotide sequence ID" value="NM_001178604.1"/>
</dbReference>
<dbReference type="SMR" id="P38145"/>
<dbReference type="BioGRID" id="32952">
    <property type="interactions" value="142"/>
</dbReference>
<dbReference type="FunCoup" id="P38145">
    <property type="interactions" value="251"/>
</dbReference>
<dbReference type="MINT" id="P38145"/>
<dbReference type="STRING" id="4932.YBR256C"/>
<dbReference type="iPTMnet" id="P38145"/>
<dbReference type="PaxDb" id="4932-YBR256C"/>
<dbReference type="PeptideAtlas" id="P38145"/>
<dbReference type="EnsemblFungi" id="YBR256C_mRNA">
    <property type="protein sequence ID" value="YBR256C"/>
    <property type="gene ID" value="YBR256C"/>
</dbReference>
<dbReference type="GeneID" id="852559"/>
<dbReference type="KEGG" id="sce:YBR256C"/>
<dbReference type="AGR" id="SGD:S000000460"/>
<dbReference type="SGD" id="S000000460">
    <property type="gene designation" value="RIB5"/>
</dbReference>
<dbReference type="VEuPathDB" id="FungiDB:YBR256C"/>
<dbReference type="eggNOG" id="KOG3310">
    <property type="taxonomic scope" value="Eukaryota"/>
</dbReference>
<dbReference type="HOGENOM" id="CLU_034388_1_1_1"/>
<dbReference type="InParanoid" id="P38145"/>
<dbReference type="OMA" id="IGGHAMS"/>
<dbReference type="OrthoDB" id="10258924at2759"/>
<dbReference type="BioCyc" id="MetaCyc:MONOMER3O-75"/>
<dbReference type="BioCyc" id="YEAST:MONOMER3O-75"/>
<dbReference type="UniPathway" id="UPA00275">
    <property type="reaction ID" value="UER00405"/>
</dbReference>
<dbReference type="BioGRID-ORCS" id="852559">
    <property type="hits" value="9 hits in 10 CRISPR screens"/>
</dbReference>
<dbReference type="PRO" id="PR:P38145"/>
<dbReference type="Proteomes" id="UP000002311">
    <property type="component" value="Chromosome II"/>
</dbReference>
<dbReference type="RNAct" id="P38145">
    <property type="molecule type" value="protein"/>
</dbReference>
<dbReference type="GO" id="GO:0004746">
    <property type="term" value="F:riboflavin synthase activity"/>
    <property type="evidence" value="ECO:0000314"/>
    <property type="project" value="SGD"/>
</dbReference>
<dbReference type="GO" id="GO:0009231">
    <property type="term" value="P:riboflavin biosynthetic process"/>
    <property type="evidence" value="ECO:0000315"/>
    <property type="project" value="SGD"/>
</dbReference>
<dbReference type="CDD" id="cd00402">
    <property type="entry name" value="Riboflavin_synthase_like"/>
    <property type="match status" value="1"/>
</dbReference>
<dbReference type="FunFam" id="2.40.30.20:FF:000004">
    <property type="entry name" value="Riboflavin synthase, alpha subunit"/>
    <property type="match status" value="1"/>
</dbReference>
<dbReference type="FunFam" id="2.40.30.20:FF:000006">
    <property type="entry name" value="Riboflavin synthase, alpha subunit"/>
    <property type="match status" value="1"/>
</dbReference>
<dbReference type="Gene3D" id="2.40.30.20">
    <property type="match status" value="2"/>
</dbReference>
<dbReference type="InterPro" id="IPR023366">
    <property type="entry name" value="ATP_synth_asu-like_sf"/>
</dbReference>
<dbReference type="InterPro" id="IPR001783">
    <property type="entry name" value="Lumazine-bd"/>
</dbReference>
<dbReference type="InterPro" id="IPR026017">
    <property type="entry name" value="Lumazine-bd_dom"/>
</dbReference>
<dbReference type="InterPro" id="IPR017938">
    <property type="entry name" value="Riboflavin_synthase-like_b-brl"/>
</dbReference>
<dbReference type="NCBIfam" id="NF006767">
    <property type="entry name" value="PRK09289.1"/>
    <property type="match status" value="1"/>
</dbReference>
<dbReference type="NCBIfam" id="TIGR00187">
    <property type="entry name" value="ribE"/>
    <property type="match status" value="1"/>
</dbReference>
<dbReference type="PANTHER" id="PTHR21098:SF0">
    <property type="entry name" value="RIBOFLAVIN SYNTHASE"/>
    <property type="match status" value="1"/>
</dbReference>
<dbReference type="PANTHER" id="PTHR21098">
    <property type="entry name" value="RIBOFLAVIN SYNTHASE ALPHA CHAIN"/>
    <property type="match status" value="1"/>
</dbReference>
<dbReference type="Pfam" id="PF00677">
    <property type="entry name" value="Lum_binding"/>
    <property type="match status" value="2"/>
</dbReference>
<dbReference type="PIRSF" id="PIRSF000498">
    <property type="entry name" value="Riboflavin_syn_A"/>
    <property type="match status" value="1"/>
</dbReference>
<dbReference type="SUPFAM" id="SSF63380">
    <property type="entry name" value="Riboflavin synthase domain-like"/>
    <property type="match status" value="2"/>
</dbReference>
<dbReference type="PROSITE" id="PS51177">
    <property type="entry name" value="LUMAZINE_BIND"/>
    <property type="match status" value="2"/>
</dbReference>
<comment type="function">
    <text evidence="5">Catalyzes the dismutation of two molecules of 6,7-dimethyl-8-ribityllumazine, resulting in the formation of riboflavin and 5-amino-6-(D-ribitylamino)uracil.</text>
</comment>
<comment type="catalytic activity">
    <reaction evidence="5">
        <text>2 6,7-dimethyl-8-(1-D-ribityl)lumazine + H(+) = 5-amino-6-(D-ribitylamino)uracil + riboflavin</text>
        <dbReference type="Rhea" id="RHEA:20772"/>
        <dbReference type="ChEBI" id="CHEBI:15378"/>
        <dbReference type="ChEBI" id="CHEBI:15934"/>
        <dbReference type="ChEBI" id="CHEBI:57986"/>
        <dbReference type="ChEBI" id="CHEBI:58201"/>
        <dbReference type="EC" id="2.5.1.9"/>
    </reaction>
</comment>
<comment type="pathway">
    <text evidence="5">Cofactor biosynthesis; riboflavin biosynthesis; riboflavin from 2-hydroxy-3-oxobutyl phosphate and 5-amino-6-(D-ribitylamino)uracil: step 2/2.</text>
</comment>
<comment type="subunit">
    <text evidence="3">Homotrimer.</text>
</comment>
<comment type="miscellaneous">
    <text evidence="4">Present with 7300 molecules/cell in log phase SD medium.</text>
</comment>